<feature type="chain" id="PRO_0000068743" description="Putative acetyltransferase YJL218W">
    <location>
        <begin position="1"/>
        <end position="196"/>
    </location>
</feature>
<feature type="active site" description="Proton donor/acceptor" evidence="1">
    <location>
        <position position="114"/>
    </location>
</feature>
<feature type="binding site" description="in other chain" evidence="1">
    <location>
        <position position="84"/>
    </location>
    <ligand>
        <name>acetyl-CoA</name>
        <dbReference type="ChEBI" id="CHEBI:57288"/>
        <note>ligand shared between dimeric partners</note>
    </ligand>
</feature>
<feature type="binding site" description="in other chain" evidence="1">
    <location>
        <position position="141"/>
    </location>
    <ligand>
        <name>acetyl-CoA</name>
        <dbReference type="ChEBI" id="CHEBI:57288"/>
        <note>ligand shared between dimeric partners</note>
    </ligand>
</feature>
<feature type="binding site" description="in other chain" evidence="1">
    <location>
        <position position="159"/>
    </location>
    <ligand>
        <name>acetyl-CoA</name>
        <dbReference type="ChEBI" id="CHEBI:57288"/>
        <note>ligand shared between dimeric partners</note>
    </ligand>
</feature>
<feature type="binding site" evidence="1">
    <location>
        <begin position="164"/>
        <end position="165"/>
    </location>
    <ligand>
        <name>acetyl-CoA</name>
        <dbReference type="ChEBI" id="CHEBI:57288"/>
        <note>ligand shared between dimeric partners</note>
    </ligand>
</feature>
<feature type="binding site" evidence="1">
    <location>
        <position position="179"/>
    </location>
    <ligand>
        <name>acetyl-CoA</name>
        <dbReference type="ChEBI" id="CHEBI:57288"/>
        <note>ligand shared between dimeric partners</note>
    </ligand>
</feature>
<feature type="binding site" description="in other chain" evidence="1">
    <location>
        <position position="182"/>
    </location>
    <ligand>
        <name>acetyl-CoA</name>
        <dbReference type="ChEBI" id="CHEBI:57288"/>
        <note>ligand shared between dimeric partners</note>
    </ligand>
</feature>
<feature type="site" description="Transition state stabilizer" evidence="1">
    <location>
        <position position="84"/>
    </location>
</feature>
<sequence length="196" mass="21480">MGVLENIVPGELYDANYDPDLLKIRKETKIKLHEYNTLSPADENKKSQVIRELLGSCTDNFIIEPPFYCDYGSNIYIGDNFYANHNLVILDGAKVVIGDNVFIAPNVGIYTAGHPIDVERRLQGLEYAMPVTIGDNVWIGGGVSIIPGVNIGKNSVIAAGSVVIRDIPENVVAAGNPCKVIRKITEKDSTTTNYRK</sequence>
<name>YJV8_YEAST</name>
<gene>
    <name type="ordered locus">YJL218W</name>
    <name type="ORF">HRA196</name>
    <name type="ORF">J0224</name>
</gene>
<dbReference type="EC" id="2.3.1.-"/>
<dbReference type="EMBL" id="Z34098">
    <property type="protein sequence ID" value="CAA83992.1"/>
    <property type="molecule type" value="Genomic_DNA"/>
</dbReference>
<dbReference type="EMBL" id="Z49493">
    <property type="protein sequence ID" value="CAA89515.1"/>
    <property type="molecule type" value="Genomic_DNA"/>
</dbReference>
<dbReference type="EMBL" id="AY692672">
    <property type="protein sequence ID" value="AAT92691.1"/>
    <property type="molecule type" value="Genomic_DNA"/>
</dbReference>
<dbReference type="EMBL" id="BK006943">
    <property type="protein sequence ID" value="DAA08594.1"/>
    <property type="molecule type" value="Genomic_DNA"/>
</dbReference>
<dbReference type="PIR" id="S50709">
    <property type="entry name" value="S50709"/>
</dbReference>
<dbReference type="RefSeq" id="NP_012317.1">
    <property type="nucleotide sequence ID" value="NM_001181651.1"/>
</dbReference>
<dbReference type="SMR" id="P40892"/>
<dbReference type="BioGRID" id="33563">
    <property type="interactions" value="38"/>
</dbReference>
<dbReference type="DIP" id="DIP-1828N"/>
<dbReference type="FunCoup" id="P40892">
    <property type="interactions" value="54"/>
</dbReference>
<dbReference type="IntAct" id="P40892">
    <property type="interactions" value="8"/>
</dbReference>
<dbReference type="MINT" id="P40892"/>
<dbReference type="STRING" id="4932.YJL218W"/>
<dbReference type="iPTMnet" id="P40892"/>
<dbReference type="PaxDb" id="4932-YJL218W"/>
<dbReference type="PeptideAtlas" id="P40892"/>
<dbReference type="EnsemblFungi" id="YJL218W_mRNA">
    <property type="protein sequence ID" value="YJL218W"/>
    <property type="gene ID" value="YJL218W"/>
</dbReference>
<dbReference type="GeneID" id="853237"/>
<dbReference type="KEGG" id="sce:YJL218W"/>
<dbReference type="AGR" id="SGD:S000003754"/>
<dbReference type="SGD" id="S000003754">
    <property type="gene designation" value="YJL218W"/>
</dbReference>
<dbReference type="VEuPathDB" id="FungiDB:YJL218W"/>
<dbReference type="eggNOG" id="KOG4750">
    <property type="taxonomic scope" value="Eukaryota"/>
</dbReference>
<dbReference type="HOGENOM" id="CLU_051638_3_0_1"/>
<dbReference type="InParanoid" id="P40892"/>
<dbReference type="OMA" id="CVILDCN"/>
<dbReference type="OrthoDB" id="25818at2759"/>
<dbReference type="BioGRID-ORCS" id="853237">
    <property type="hits" value="0 hits in 10 CRISPR screens"/>
</dbReference>
<dbReference type="PRO" id="PR:P40892"/>
<dbReference type="Proteomes" id="UP000002311">
    <property type="component" value="Chromosome X"/>
</dbReference>
<dbReference type="RNAct" id="P40892">
    <property type="molecule type" value="protein"/>
</dbReference>
<dbReference type="GO" id="GO:0005739">
    <property type="term" value="C:mitochondrion"/>
    <property type="evidence" value="ECO:0000314"/>
    <property type="project" value="SGD"/>
</dbReference>
<dbReference type="GO" id="GO:0008870">
    <property type="term" value="F:galactoside O-acetyltransferase activity"/>
    <property type="evidence" value="ECO:0000318"/>
    <property type="project" value="GO_Central"/>
</dbReference>
<dbReference type="CDD" id="cd03357">
    <property type="entry name" value="LbH_MAT_GAT"/>
    <property type="match status" value="1"/>
</dbReference>
<dbReference type="FunFam" id="2.160.10.10:FF:000008">
    <property type="entry name" value="Maltose O-acetyltransferase"/>
    <property type="match status" value="1"/>
</dbReference>
<dbReference type="Gene3D" id="2.160.10.10">
    <property type="entry name" value="Hexapeptide repeat proteins"/>
    <property type="match status" value="1"/>
</dbReference>
<dbReference type="InterPro" id="IPR001451">
    <property type="entry name" value="Hexapep"/>
</dbReference>
<dbReference type="InterPro" id="IPR018357">
    <property type="entry name" value="Hexapep_transf_CS"/>
</dbReference>
<dbReference type="InterPro" id="IPR039369">
    <property type="entry name" value="LacA-like"/>
</dbReference>
<dbReference type="InterPro" id="IPR024688">
    <property type="entry name" value="Mac_dom"/>
</dbReference>
<dbReference type="InterPro" id="IPR011004">
    <property type="entry name" value="Trimer_LpxA-like_sf"/>
</dbReference>
<dbReference type="PANTHER" id="PTHR43017:SF1">
    <property type="entry name" value="ACETYLTRANSFERASE YJL218W-RELATED"/>
    <property type="match status" value="1"/>
</dbReference>
<dbReference type="PANTHER" id="PTHR43017">
    <property type="entry name" value="GALACTOSIDE O-ACETYLTRANSFERASE"/>
    <property type="match status" value="1"/>
</dbReference>
<dbReference type="Pfam" id="PF00132">
    <property type="entry name" value="Hexapep"/>
    <property type="match status" value="1"/>
</dbReference>
<dbReference type="Pfam" id="PF12464">
    <property type="entry name" value="Mac"/>
    <property type="match status" value="1"/>
</dbReference>
<dbReference type="SMART" id="SM01266">
    <property type="entry name" value="Mac"/>
    <property type="match status" value="1"/>
</dbReference>
<dbReference type="SUPFAM" id="SSF51161">
    <property type="entry name" value="Trimeric LpxA-like enzymes"/>
    <property type="match status" value="1"/>
</dbReference>
<dbReference type="PROSITE" id="PS00101">
    <property type="entry name" value="HEXAPEP_TRANSFERASES"/>
    <property type="match status" value="1"/>
</dbReference>
<keyword id="KW-0012">Acyltransferase</keyword>
<keyword id="KW-1185">Reference proteome</keyword>
<keyword id="KW-0677">Repeat</keyword>
<keyword id="KW-0808">Transferase</keyword>
<organism>
    <name type="scientific">Saccharomyces cerevisiae (strain ATCC 204508 / S288c)</name>
    <name type="common">Baker's yeast</name>
    <dbReference type="NCBI Taxonomy" id="559292"/>
    <lineage>
        <taxon>Eukaryota</taxon>
        <taxon>Fungi</taxon>
        <taxon>Dikarya</taxon>
        <taxon>Ascomycota</taxon>
        <taxon>Saccharomycotina</taxon>
        <taxon>Saccharomycetes</taxon>
        <taxon>Saccharomycetales</taxon>
        <taxon>Saccharomycetaceae</taxon>
        <taxon>Saccharomyces</taxon>
    </lineage>
</organism>
<proteinExistence type="evidence at protein level"/>
<accession>P40892</accession>
<accession>D6VVX8</accession>
<evidence type="ECO:0000250" key="1">
    <source>
        <dbReference type="UniProtKB" id="P07464"/>
    </source>
</evidence>
<evidence type="ECO:0000250" key="2">
    <source>
        <dbReference type="UniProtKB" id="P77791"/>
    </source>
</evidence>
<evidence type="ECO:0000305" key="3"/>
<reference key="1">
    <citation type="journal article" date="1994" name="Yeast">
        <title>Sequence analysis of a 40.2 kb DNA fragment located near the left telomere of yeast chromosome X.</title>
        <authorList>
            <person name="Vandenbol M."/>
            <person name="Durand P."/>
            <person name="Bolle P.-A."/>
            <person name="Dion C."/>
            <person name="Portetelle D."/>
            <person name="Hilger F."/>
        </authorList>
    </citation>
    <scope>NUCLEOTIDE SEQUENCE [GENOMIC DNA]</scope>
    <source>
        <strain>ATCC 204508 / S288c</strain>
    </source>
</reference>
<reference key="2">
    <citation type="journal article" date="1996" name="EMBO J.">
        <title>Complete nucleotide sequence of Saccharomyces cerevisiae chromosome X.</title>
        <authorList>
            <person name="Galibert F."/>
            <person name="Alexandraki D."/>
            <person name="Baur A."/>
            <person name="Boles E."/>
            <person name="Chalwatzis N."/>
            <person name="Chuat J.-C."/>
            <person name="Coster F."/>
            <person name="Cziepluch C."/>
            <person name="de Haan M."/>
            <person name="Domdey H."/>
            <person name="Durand P."/>
            <person name="Entian K.-D."/>
            <person name="Gatius M."/>
            <person name="Goffeau A."/>
            <person name="Grivell L.A."/>
            <person name="Hennemann A."/>
            <person name="Herbert C.J."/>
            <person name="Heumann K."/>
            <person name="Hilger F."/>
            <person name="Hollenberg C.P."/>
            <person name="Huang M.-E."/>
            <person name="Jacq C."/>
            <person name="Jauniaux J.-C."/>
            <person name="Katsoulou C."/>
            <person name="Kirchrath L."/>
            <person name="Kleine K."/>
            <person name="Kordes E."/>
            <person name="Koetter P."/>
            <person name="Liebl S."/>
            <person name="Louis E.J."/>
            <person name="Manus V."/>
            <person name="Mewes H.-W."/>
            <person name="Miosga T."/>
            <person name="Obermaier B."/>
            <person name="Perea J."/>
            <person name="Pohl T.M."/>
            <person name="Portetelle D."/>
            <person name="Pujol A."/>
            <person name="Purnelle B."/>
            <person name="Ramezani Rad M."/>
            <person name="Rasmussen S.W."/>
            <person name="Rose M."/>
            <person name="Rossau R."/>
            <person name="Schaaff-Gerstenschlaeger I."/>
            <person name="Smits P.H.M."/>
            <person name="Scarcez T."/>
            <person name="Soriano N."/>
            <person name="To Van D."/>
            <person name="Tzermia M."/>
            <person name="Van Broekhoven A."/>
            <person name="Vandenbol M."/>
            <person name="Wedler H."/>
            <person name="von Wettstein D."/>
            <person name="Wambutt R."/>
            <person name="Zagulski M."/>
            <person name="Zollner A."/>
            <person name="Karpfinger-Hartl L."/>
        </authorList>
    </citation>
    <scope>NUCLEOTIDE SEQUENCE [LARGE SCALE GENOMIC DNA]</scope>
    <source>
        <strain>ATCC 204508 / S288c</strain>
    </source>
</reference>
<reference key="3">
    <citation type="journal article" date="2014" name="G3 (Bethesda)">
        <title>The reference genome sequence of Saccharomyces cerevisiae: Then and now.</title>
        <authorList>
            <person name="Engel S.R."/>
            <person name="Dietrich F.S."/>
            <person name="Fisk D.G."/>
            <person name="Binkley G."/>
            <person name="Balakrishnan R."/>
            <person name="Costanzo M.C."/>
            <person name="Dwight S.S."/>
            <person name="Hitz B.C."/>
            <person name="Karra K."/>
            <person name="Nash R.S."/>
            <person name="Weng S."/>
            <person name="Wong E.D."/>
            <person name="Lloyd P."/>
            <person name="Skrzypek M.S."/>
            <person name="Miyasato S.R."/>
            <person name="Simison M."/>
            <person name="Cherry J.M."/>
        </authorList>
    </citation>
    <scope>GENOME REANNOTATION</scope>
    <source>
        <strain>ATCC 204508 / S288c</strain>
    </source>
</reference>
<reference key="4">
    <citation type="journal article" date="2007" name="Genome Res.">
        <title>Approaching a complete repository of sequence-verified protein-encoding clones for Saccharomyces cerevisiae.</title>
        <authorList>
            <person name="Hu Y."/>
            <person name="Rolfs A."/>
            <person name="Bhullar B."/>
            <person name="Murthy T.V.S."/>
            <person name="Zhu C."/>
            <person name="Berger M.F."/>
            <person name="Camargo A.A."/>
            <person name="Kelley F."/>
            <person name="McCarron S."/>
            <person name="Jepson D."/>
            <person name="Richardson A."/>
            <person name="Raphael J."/>
            <person name="Moreira D."/>
            <person name="Taycher E."/>
            <person name="Zuo D."/>
            <person name="Mohr S."/>
            <person name="Kane M.F."/>
            <person name="Williamson J."/>
            <person name="Simpson A.J.G."/>
            <person name="Bulyk M.L."/>
            <person name="Harlow E."/>
            <person name="Marsischky G."/>
            <person name="Kolodner R.D."/>
            <person name="LaBaer J."/>
        </authorList>
    </citation>
    <scope>NUCLEOTIDE SEQUENCE [GENOMIC DNA]</scope>
    <source>
        <strain>ATCC 204508 / S288c</strain>
    </source>
</reference>
<comment type="subunit">
    <text evidence="2">Homodimer.</text>
</comment>
<comment type="interaction">
    <interactant intactId="EBI-26263">
        <id>P40892</id>
    </interactant>
    <interactant intactId="EBI-16219">
        <id>P39940</id>
        <label>RSP5</label>
    </interactant>
    <organismsDiffer>false</organismsDiffer>
    <experiments>2</experiments>
</comment>
<comment type="similarity">
    <text evidence="3">Belongs to the transferase hexapeptide repeat family.</text>
</comment>
<protein>
    <recommendedName>
        <fullName evidence="3">Putative acetyltransferase YJL218W</fullName>
        <ecNumber>2.3.1.-</ecNumber>
    </recommendedName>
</protein>